<proteinExistence type="evidence at protein level"/>
<keyword id="KW-0903">Direct protein sequencing</keyword>
<keyword id="KW-0433">Leucine-rich repeat</keyword>
<keyword id="KW-0597">Phosphoprotein</keyword>
<keyword id="KW-1185">Reference proteome</keyword>
<keyword id="KW-0677">Repeat</keyword>
<keyword id="KW-0833">Ubl conjugation pathway</keyword>
<evidence type="ECO:0000250" key="1"/>
<evidence type="ECO:0000250" key="2">
    <source>
        <dbReference type="UniProtKB" id="Q15345"/>
    </source>
</evidence>
<evidence type="ECO:0000256" key="3">
    <source>
        <dbReference type="SAM" id="MobiDB-lite"/>
    </source>
</evidence>
<evidence type="ECO:0000269" key="4">
    <source>
    </source>
</evidence>
<evidence type="ECO:0000305" key="5"/>
<evidence type="ECO:0007744" key="6">
    <source>
    </source>
</evidence>
<reference key="1">
    <citation type="journal article" date="2005" name="Science">
        <title>The transcriptional landscape of the mammalian genome.</title>
        <authorList>
            <person name="Carninci P."/>
            <person name="Kasukawa T."/>
            <person name="Katayama S."/>
            <person name="Gough J."/>
            <person name="Frith M.C."/>
            <person name="Maeda N."/>
            <person name="Oyama R."/>
            <person name="Ravasi T."/>
            <person name="Lenhard B."/>
            <person name="Wells C."/>
            <person name="Kodzius R."/>
            <person name="Shimokawa K."/>
            <person name="Bajic V.B."/>
            <person name="Brenner S.E."/>
            <person name="Batalov S."/>
            <person name="Forrest A.R."/>
            <person name="Zavolan M."/>
            <person name="Davis M.J."/>
            <person name="Wilming L.G."/>
            <person name="Aidinis V."/>
            <person name="Allen J.E."/>
            <person name="Ambesi-Impiombato A."/>
            <person name="Apweiler R."/>
            <person name="Aturaliya R.N."/>
            <person name="Bailey T.L."/>
            <person name="Bansal M."/>
            <person name="Baxter L."/>
            <person name="Beisel K.W."/>
            <person name="Bersano T."/>
            <person name="Bono H."/>
            <person name="Chalk A.M."/>
            <person name="Chiu K.P."/>
            <person name="Choudhary V."/>
            <person name="Christoffels A."/>
            <person name="Clutterbuck D.R."/>
            <person name="Crowe M.L."/>
            <person name="Dalla E."/>
            <person name="Dalrymple B.P."/>
            <person name="de Bono B."/>
            <person name="Della Gatta G."/>
            <person name="di Bernardo D."/>
            <person name="Down T."/>
            <person name="Engstrom P."/>
            <person name="Fagiolini M."/>
            <person name="Faulkner G."/>
            <person name="Fletcher C.F."/>
            <person name="Fukushima T."/>
            <person name="Furuno M."/>
            <person name="Futaki S."/>
            <person name="Gariboldi M."/>
            <person name="Georgii-Hemming P."/>
            <person name="Gingeras T.R."/>
            <person name="Gojobori T."/>
            <person name="Green R.E."/>
            <person name="Gustincich S."/>
            <person name="Harbers M."/>
            <person name="Hayashi Y."/>
            <person name="Hensch T.K."/>
            <person name="Hirokawa N."/>
            <person name="Hill D."/>
            <person name="Huminiecki L."/>
            <person name="Iacono M."/>
            <person name="Ikeo K."/>
            <person name="Iwama A."/>
            <person name="Ishikawa T."/>
            <person name="Jakt M."/>
            <person name="Kanapin A."/>
            <person name="Katoh M."/>
            <person name="Kawasawa Y."/>
            <person name="Kelso J."/>
            <person name="Kitamura H."/>
            <person name="Kitano H."/>
            <person name="Kollias G."/>
            <person name="Krishnan S.P."/>
            <person name="Kruger A."/>
            <person name="Kummerfeld S.K."/>
            <person name="Kurochkin I.V."/>
            <person name="Lareau L.F."/>
            <person name="Lazarevic D."/>
            <person name="Lipovich L."/>
            <person name="Liu J."/>
            <person name="Liuni S."/>
            <person name="McWilliam S."/>
            <person name="Madan Babu M."/>
            <person name="Madera M."/>
            <person name="Marchionni L."/>
            <person name="Matsuda H."/>
            <person name="Matsuzawa S."/>
            <person name="Miki H."/>
            <person name="Mignone F."/>
            <person name="Miyake S."/>
            <person name="Morris K."/>
            <person name="Mottagui-Tabar S."/>
            <person name="Mulder N."/>
            <person name="Nakano N."/>
            <person name="Nakauchi H."/>
            <person name="Ng P."/>
            <person name="Nilsson R."/>
            <person name="Nishiguchi S."/>
            <person name="Nishikawa S."/>
            <person name="Nori F."/>
            <person name="Ohara O."/>
            <person name="Okazaki Y."/>
            <person name="Orlando V."/>
            <person name="Pang K.C."/>
            <person name="Pavan W.J."/>
            <person name="Pavesi G."/>
            <person name="Pesole G."/>
            <person name="Petrovsky N."/>
            <person name="Piazza S."/>
            <person name="Reed J."/>
            <person name="Reid J.F."/>
            <person name="Ring B.Z."/>
            <person name="Ringwald M."/>
            <person name="Rost B."/>
            <person name="Ruan Y."/>
            <person name="Salzberg S.L."/>
            <person name="Sandelin A."/>
            <person name="Schneider C."/>
            <person name="Schoenbach C."/>
            <person name="Sekiguchi K."/>
            <person name="Semple C.A."/>
            <person name="Seno S."/>
            <person name="Sessa L."/>
            <person name="Sheng Y."/>
            <person name="Shibata Y."/>
            <person name="Shimada H."/>
            <person name="Shimada K."/>
            <person name="Silva D."/>
            <person name="Sinclair B."/>
            <person name="Sperling S."/>
            <person name="Stupka E."/>
            <person name="Sugiura K."/>
            <person name="Sultana R."/>
            <person name="Takenaka Y."/>
            <person name="Taki K."/>
            <person name="Tammoja K."/>
            <person name="Tan S.L."/>
            <person name="Tang S."/>
            <person name="Taylor M.S."/>
            <person name="Tegner J."/>
            <person name="Teichmann S.A."/>
            <person name="Ueda H.R."/>
            <person name="van Nimwegen E."/>
            <person name="Verardo R."/>
            <person name="Wei C.L."/>
            <person name="Yagi K."/>
            <person name="Yamanishi H."/>
            <person name="Zabarovsky E."/>
            <person name="Zhu S."/>
            <person name="Zimmer A."/>
            <person name="Hide W."/>
            <person name="Bult C."/>
            <person name="Grimmond S.M."/>
            <person name="Teasdale R.D."/>
            <person name="Liu E.T."/>
            <person name="Brusic V."/>
            <person name="Quackenbush J."/>
            <person name="Wahlestedt C."/>
            <person name="Mattick J.S."/>
            <person name="Hume D.A."/>
            <person name="Kai C."/>
            <person name="Sasaki D."/>
            <person name="Tomaru Y."/>
            <person name="Fukuda S."/>
            <person name="Kanamori-Katayama M."/>
            <person name="Suzuki M."/>
            <person name="Aoki J."/>
            <person name="Arakawa T."/>
            <person name="Iida J."/>
            <person name="Imamura K."/>
            <person name="Itoh M."/>
            <person name="Kato T."/>
            <person name="Kawaji H."/>
            <person name="Kawagashira N."/>
            <person name="Kawashima T."/>
            <person name="Kojima M."/>
            <person name="Kondo S."/>
            <person name="Konno H."/>
            <person name="Nakano K."/>
            <person name="Ninomiya N."/>
            <person name="Nishio T."/>
            <person name="Okada M."/>
            <person name="Plessy C."/>
            <person name="Shibata K."/>
            <person name="Shiraki T."/>
            <person name="Suzuki S."/>
            <person name="Tagami M."/>
            <person name="Waki K."/>
            <person name="Watahiki A."/>
            <person name="Okamura-Oho Y."/>
            <person name="Suzuki H."/>
            <person name="Kawai J."/>
            <person name="Hayashizaki Y."/>
        </authorList>
    </citation>
    <scope>NUCLEOTIDE SEQUENCE [LARGE SCALE MRNA]</scope>
    <source>
        <strain>NOD</strain>
    </source>
</reference>
<reference key="2">
    <citation type="journal article" date="2009" name="PLoS Biol.">
        <title>Lineage-specific biology revealed by a finished genome assembly of the mouse.</title>
        <authorList>
            <person name="Church D.M."/>
            <person name="Goodstadt L."/>
            <person name="Hillier L.W."/>
            <person name="Zody M.C."/>
            <person name="Goldstein S."/>
            <person name="She X."/>
            <person name="Bult C.J."/>
            <person name="Agarwala R."/>
            <person name="Cherry J.L."/>
            <person name="DiCuccio M."/>
            <person name="Hlavina W."/>
            <person name="Kapustin Y."/>
            <person name="Meric P."/>
            <person name="Maglott D."/>
            <person name="Birtle Z."/>
            <person name="Marques A.C."/>
            <person name="Graves T."/>
            <person name="Zhou S."/>
            <person name="Teague B."/>
            <person name="Potamousis K."/>
            <person name="Churas C."/>
            <person name="Place M."/>
            <person name="Herschleb J."/>
            <person name="Runnheim R."/>
            <person name="Forrest D."/>
            <person name="Amos-Landgraf J."/>
            <person name="Schwartz D.C."/>
            <person name="Cheng Z."/>
            <person name="Lindblad-Toh K."/>
            <person name="Eichler E.E."/>
            <person name="Ponting C.P."/>
        </authorList>
    </citation>
    <scope>NUCLEOTIDE SEQUENCE [LARGE SCALE GENOMIC DNA]</scope>
    <source>
        <strain>C57BL/6J</strain>
    </source>
</reference>
<reference key="3">
    <citation type="journal article" date="2004" name="Genome Res.">
        <title>The status, quality, and expansion of the NIH full-length cDNA project: the Mammalian Gene Collection (MGC).</title>
        <authorList>
            <consortium name="The MGC Project Team"/>
        </authorList>
    </citation>
    <scope>NUCLEOTIDE SEQUENCE [LARGE SCALE MRNA] OF 20-807</scope>
    <source>
        <strain>C57BL/6J</strain>
        <tissue>Mammary gland</tissue>
        <tissue>Retina</tissue>
    </source>
</reference>
<reference key="4">
    <citation type="journal article" date="2001" name="J. Biol. Chem.">
        <title>Muf1, a novel elongin BC-interacting leucine-rich repeat protein that can assemble with Cul5 and Rbx1 to reconstitute a ubiquitin ligase.</title>
        <authorList>
            <person name="Kamura T."/>
            <person name="Burian D."/>
            <person name="Yan Q."/>
            <person name="Schmidt S.L."/>
            <person name="Lane W.S."/>
            <person name="Querido E."/>
            <person name="Branton P.E."/>
            <person name="Shilatifard A."/>
            <person name="Conaway R.C."/>
            <person name="Conaway J.W."/>
        </authorList>
    </citation>
    <scope>PARTIAL PROTEIN SEQUENCE</scope>
    <scope>RECONSTRUCTION FROM ESTS</scope>
    <scope>MUTAGENESIS OF LEU-46 AND CYS-50</scope>
    <scope>IDENTIFICATION IN E3 UBIQUITIN LIGASE COMPLEX WITH CUL5</scope>
</reference>
<reference key="5">
    <citation type="journal article" date="2010" name="Cell">
        <title>A tissue-specific atlas of mouse protein phosphorylation and expression.</title>
        <authorList>
            <person name="Huttlin E.L."/>
            <person name="Jedrychowski M.P."/>
            <person name="Elias J.E."/>
            <person name="Goswami T."/>
            <person name="Rad R."/>
            <person name="Beausoleil S.A."/>
            <person name="Villen J."/>
            <person name="Haas W."/>
            <person name="Sowa M.E."/>
            <person name="Gygi S.P."/>
        </authorList>
    </citation>
    <scope>PHOSPHORYLATION [LARGE SCALE ANALYSIS] AT THR-327</scope>
    <scope>IDENTIFICATION BY MASS SPECTROMETRY [LARGE SCALE ANALYSIS]</scope>
    <source>
        <tissue>Spleen</tissue>
        <tissue>Testis</tissue>
    </source>
</reference>
<feature type="chain" id="PRO_0000096646" description="Leucine-rich repeat-containing protein 41">
    <location>
        <begin position="1"/>
        <end position="807"/>
    </location>
</feature>
<feature type="repeat" description="LRR 1">
    <location>
        <begin position="482"/>
        <end position="502"/>
    </location>
</feature>
<feature type="repeat" description="LRR 2">
    <location>
        <begin position="513"/>
        <end position="525"/>
    </location>
</feature>
<feature type="repeat" description="LRR 3">
    <location>
        <begin position="526"/>
        <end position="550"/>
    </location>
</feature>
<feature type="repeat" description="LRR 4">
    <location>
        <begin position="608"/>
        <end position="632"/>
    </location>
</feature>
<feature type="repeat" description="LRR 5">
    <location>
        <begin position="638"/>
        <end position="661"/>
    </location>
</feature>
<feature type="repeat" description="LRR 6">
    <location>
        <begin position="696"/>
        <end position="723"/>
    </location>
</feature>
<feature type="repeat" description="LRR 7">
    <location>
        <begin position="726"/>
        <end position="747"/>
    </location>
</feature>
<feature type="region of interest" description="Interaction with Elongin BC complex" evidence="1">
    <location>
        <begin position="45"/>
        <end position="54"/>
    </location>
</feature>
<feature type="region of interest" description="Disordered" evidence="3">
    <location>
        <begin position="269"/>
        <end position="290"/>
    </location>
</feature>
<feature type="region of interest" description="Disordered" evidence="3">
    <location>
        <begin position="304"/>
        <end position="335"/>
    </location>
</feature>
<feature type="region of interest" description="Disordered" evidence="3">
    <location>
        <begin position="349"/>
        <end position="403"/>
    </location>
</feature>
<feature type="compositionally biased region" description="Low complexity" evidence="3">
    <location>
        <begin position="352"/>
        <end position="381"/>
    </location>
</feature>
<feature type="compositionally biased region" description="Basic residues" evidence="3">
    <location>
        <begin position="382"/>
        <end position="396"/>
    </location>
</feature>
<feature type="modified residue" description="Phosphoserine" evidence="2">
    <location>
        <position position="155"/>
    </location>
</feature>
<feature type="modified residue" description="Phosphoserine" evidence="2">
    <location>
        <position position="276"/>
    </location>
</feature>
<feature type="modified residue" description="Phosphoserine" evidence="2">
    <location>
        <position position="326"/>
    </location>
</feature>
<feature type="modified residue" description="Phosphothreonine" evidence="6">
    <location>
        <position position="327"/>
    </location>
</feature>
<feature type="modified residue" description="Phosphoserine" evidence="2">
    <location>
        <position position="368"/>
    </location>
</feature>
<feature type="mutagenesis site" description="No association with Elongin BC complex; when associated with F-50." evidence="4">
    <original>L</original>
    <variation>P</variation>
    <location>
        <position position="46"/>
    </location>
</feature>
<feature type="mutagenesis site" description="No association with Elongin BC complex; when associated with P-46." evidence="4">
    <original>C</original>
    <variation>F</variation>
    <location>
        <position position="50"/>
    </location>
</feature>
<feature type="sequence conflict" description="In Ref. 3; AAH71258." evidence="5" ref="3">
    <original>APPALFELC</original>
    <variation>RTRGSTHAS</variation>
    <location>
        <begin position="42"/>
        <end position="50"/>
    </location>
</feature>
<feature type="sequence conflict" description="In Ref. 1; BAE32713." evidence="5" ref="1">
    <original>G</original>
    <variation>E</variation>
    <location>
        <position position="51"/>
    </location>
</feature>
<feature type="sequence conflict" description="In Ref. 1; BAE32713." evidence="5" ref="1">
    <original>F</original>
    <variation>Y</variation>
    <location>
        <position position="672"/>
    </location>
</feature>
<feature type="sequence conflict" description="In Ref. 1; BAE32713." evidence="5" ref="1">
    <original>D</original>
    <variation>G</variation>
    <location>
        <position position="733"/>
    </location>
</feature>
<protein>
    <recommendedName>
        <fullName>Leucine-rich repeat-containing protein 41</fullName>
    </recommendedName>
    <alternativeName>
        <fullName>Protein Muf1</fullName>
    </alternativeName>
</protein>
<sequence>MAAPEAWRARSCWFCEVAAATTMEATSREAAPAKSSASGPSAPPALFELCGRAVSAHMGVLESGVWALPGPILQSILPLLNIYYLERIEETALKKGLSTQAIWRRLWDELMKTRPSSLESVTCWRAKFMEAFFSHVLRGTIDVSSDKRLCDQRFSPLLHSSRHVRQLTICNMLQGATELVAEPNRRVLETLASSLHTLKFRHLLFSDVAAQQSLRQLLHQLIHHGAVSQVSLYSWPVPESALFILILTMSAGFWQPGPGSLPCRLCGEASRGRAPSRDEGSLLLGSRRPRRDAAERCAAALMATRRKSEVKQMPRAVPPTRVTRRSTQESLAIGGTDSKLYLPATSYEASGTKQPSAPAAASASSSTSSKRAPASSASQPKPLKRFKRAAGKKGPRTRQGSGAESEDLYDFVFIVAGEKEDGEEMEIGEVACGALDGSDPSCLGLPALEASQRFRSISTLELFTVPLSTEAALTLCHLLSSWVSLESLTLSYNGLGSNIFRLLDSLRALSGQAGCRLRALHLSDLFSPLPILELTRAIVRALPLLRVLSIRVDHPSQRDNPAVPENAGPPGHIVGDEEIPENCLEQLEMGFPRGAQPAPLLCSVLKASGSLQQLSLDSATFASPQDFGLVLQTLKEHNLSLKRLSFHDMNLADCQSEVLFLLKNLTLQEITFSFCRLFEKRPVQFLPEMVAAMKGNSTLKGLRLPGNRLGNAGLLALADVFSEDSSSSLCQLDISSNCIKPDGLLEFAKRLERWGRGAFGHLRLFQNWLDQDAVTAREAIRRLRATCHVVSDSWDSTQAFADYVSTM</sequence>
<accession>Q8K1C9</accession>
<accession>A2A911</accession>
<accession>Q3U3S2</accession>
<accession>Q6IQY7</accession>
<accession>Q91VX4</accession>
<organism>
    <name type="scientific">Mus musculus</name>
    <name type="common">Mouse</name>
    <dbReference type="NCBI Taxonomy" id="10090"/>
    <lineage>
        <taxon>Eukaryota</taxon>
        <taxon>Metazoa</taxon>
        <taxon>Chordata</taxon>
        <taxon>Craniata</taxon>
        <taxon>Vertebrata</taxon>
        <taxon>Euteleostomi</taxon>
        <taxon>Mammalia</taxon>
        <taxon>Eutheria</taxon>
        <taxon>Euarchontoglires</taxon>
        <taxon>Glires</taxon>
        <taxon>Rodentia</taxon>
        <taxon>Myomorpha</taxon>
        <taxon>Muroidea</taxon>
        <taxon>Muridae</taxon>
        <taxon>Murinae</taxon>
        <taxon>Mus</taxon>
        <taxon>Mus</taxon>
    </lineage>
</organism>
<comment type="function">
    <text evidence="1">Probable substrate recognition component of an ECS (Elongin BC-CUL2/5-SOCS-box protein) E3 ubiquitin ligase complex which mediates the ubiquitination and subsequent proteasomal degradation of target proteins.</text>
</comment>
<comment type="pathway">
    <text>Protein modification; protein ubiquitination.</text>
</comment>
<comment type="subunit">
    <text evidence="1">Part of an E3 ubiquitin-protein ligase complex with Elongin BC (ELOB and ELOC), RBX1 and CUL5. Component of a probable ECS(LRRC41) complex which contains CUL5, RNF7/RBX2, Elongin BC and LRRC41. Interacts with CUL5, RNF7, ELOB and ELOC (By similarity).</text>
</comment>
<comment type="domain">
    <text>The Elongin BC complex binding domain is also known as BC-box with the consensus [APST]-L-x(3)-C-x(3)-[AILV].</text>
</comment>
<comment type="caution">
    <text evidence="5">It is uncertain whether Met-1 or Met-23 is the initiator.</text>
</comment>
<comment type="sequence caution" evidence="5">
    <conflict type="erroneous initiation">
        <sequence resource="EMBL-CDS" id="AAH22976"/>
    </conflict>
</comment>
<gene>
    <name type="primary">Lrrc41</name>
    <name type="synonym">Muf1</name>
</gene>
<dbReference type="EMBL" id="AK154613">
    <property type="protein sequence ID" value="BAE32713.1"/>
    <property type="molecule type" value="mRNA"/>
</dbReference>
<dbReference type="EMBL" id="AL627105">
    <property type="status" value="NOT_ANNOTATED_CDS"/>
    <property type="molecule type" value="Genomic_DNA"/>
</dbReference>
<dbReference type="EMBL" id="BC007169">
    <property type="protein sequence ID" value="AAH07169.1"/>
    <property type="molecule type" value="mRNA"/>
</dbReference>
<dbReference type="EMBL" id="BC022976">
    <property type="protein sequence ID" value="AAH22976.2"/>
    <property type="status" value="ALT_INIT"/>
    <property type="molecule type" value="mRNA"/>
</dbReference>
<dbReference type="EMBL" id="BC071258">
    <property type="protein sequence ID" value="AAH71258.1"/>
    <property type="molecule type" value="mRNA"/>
</dbReference>
<dbReference type="CCDS" id="CCDS84786.1"/>
<dbReference type="RefSeq" id="NP_705741.3">
    <property type="nucleotide sequence ID" value="NM_153521.2"/>
</dbReference>
<dbReference type="SMR" id="Q8K1C9"/>
<dbReference type="BioGRID" id="230994">
    <property type="interactions" value="10"/>
</dbReference>
<dbReference type="FunCoup" id="Q8K1C9">
    <property type="interactions" value="4552"/>
</dbReference>
<dbReference type="IntAct" id="Q8K1C9">
    <property type="interactions" value="4"/>
</dbReference>
<dbReference type="STRING" id="10090.ENSMUSP00000030471"/>
<dbReference type="GlyGen" id="Q8K1C9">
    <property type="glycosylation" value="1 site, 1 O-linked glycan (1 site)"/>
</dbReference>
<dbReference type="iPTMnet" id="Q8K1C9"/>
<dbReference type="PhosphoSitePlus" id="Q8K1C9"/>
<dbReference type="SwissPalm" id="Q8K1C9"/>
<dbReference type="jPOST" id="Q8K1C9"/>
<dbReference type="PaxDb" id="10090-ENSMUSP00000030471"/>
<dbReference type="PeptideAtlas" id="Q8K1C9"/>
<dbReference type="ProteomicsDB" id="290153"/>
<dbReference type="Pumba" id="Q8K1C9"/>
<dbReference type="Antibodypedia" id="32783">
    <property type="antibodies" value="135 antibodies from 28 providers"/>
</dbReference>
<dbReference type="Ensembl" id="ENSMUST00000030471.9">
    <property type="protein sequence ID" value="ENSMUSP00000030471.9"/>
    <property type="gene ID" value="ENSMUSG00000028703.15"/>
</dbReference>
<dbReference type="GeneID" id="230654"/>
<dbReference type="KEGG" id="mmu:230654"/>
<dbReference type="UCSC" id="uc008ufx.1">
    <property type="organism name" value="mouse"/>
</dbReference>
<dbReference type="AGR" id="MGI:2441984"/>
<dbReference type="CTD" id="10489"/>
<dbReference type="MGI" id="MGI:2441984">
    <property type="gene designation" value="Lrrc41"/>
</dbReference>
<dbReference type="VEuPathDB" id="HostDB:ENSMUSG00000028703"/>
<dbReference type="eggNOG" id="ENOG502R5T0">
    <property type="taxonomic scope" value="Eukaryota"/>
</dbReference>
<dbReference type="GeneTree" id="ENSGT00390000015908"/>
<dbReference type="HOGENOM" id="CLU_021836_0_0_1"/>
<dbReference type="InParanoid" id="Q8K1C9"/>
<dbReference type="OMA" id="VVSDSWH"/>
<dbReference type="OrthoDB" id="9415738at2759"/>
<dbReference type="PhylomeDB" id="Q8K1C9"/>
<dbReference type="TreeFam" id="TF335481"/>
<dbReference type="Reactome" id="R-MMU-8951664">
    <property type="pathway name" value="Neddylation"/>
</dbReference>
<dbReference type="Reactome" id="R-MMU-9706019">
    <property type="pathway name" value="RHOBTB3 ATPase cycle"/>
</dbReference>
<dbReference type="Reactome" id="R-MMU-983168">
    <property type="pathway name" value="Antigen processing: Ubiquitination &amp; Proteasome degradation"/>
</dbReference>
<dbReference type="UniPathway" id="UPA00143"/>
<dbReference type="BioGRID-ORCS" id="230654">
    <property type="hits" value="2 hits in 70 CRISPR screens"/>
</dbReference>
<dbReference type="ChiTaRS" id="Lrrc41">
    <property type="organism name" value="mouse"/>
</dbReference>
<dbReference type="PRO" id="PR:Q8K1C9"/>
<dbReference type="Proteomes" id="UP000000589">
    <property type="component" value="Chromosome 4"/>
</dbReference>
<dbReference type="RNAct" id="Q8K1C9">
    <property type="molecule type" value="protein"/>
</dbReference>
<dbReference type="Bgee" id="ENSMUSG00000028703">
    <property type="expression patterns" value="Expressed in spermatocyte and 244 other cell types or tissues"/>
</dbReference>
<dbReference type="GO" id="GO:0005737">
    <property type="term" value="C:cytoplasm"/>
    <property type="evidence" value="ECO:0000314"/>
    <property type="project" value="MGI"/>
</dbReference>
<dbReference type="GO" id="GO:0005634">
    <property type="term" value="C:nucleus"/>
    <property type="evidence" value="ECO:0000314"/>
    <property type="project" value="MGI"/>
</dbReference>
<dbReference type="GO" id="GO:0042802">
    <property type="term" value="F:identical protein binding"/>
    <property type="evidence" value="ECO:0000353"/>
    <property type="project" value="MGI"/>
</dbReference>
<dbReference type="GO" id="GO:0016567">
    <property type="term" value="P:protein ubiquitination"/>
    <property type="evidence" value="ECO:0007669"/>
    <property type="project" value="UniProtKB-UniPathway"/>
</dbReference>
<dbReference type="FunFam" id="3.80.10.10:FF:000114">
    <property type="entry name" value="leucine-rich repeat-containing protein 41 isoform X1"/>
    <property type="match status" value="1"/>
</dbReference>
<dbReference type="FunFam" id="3.80.10.10:FF:000088">
    <property type="entry name" value="Putative leucine-rich repeat-containing protein 41"/>
    <property type="match status" value="1"/>
</dbReference>
<dbReference type="Gene3D" id="3.80.10.10">
    <property type="entry name" value="Ribonuclease Inhibitor"/>
    <property type="match status" value="2"/>
</dbReference>
<dbReference type="InterPro" id="IPR026137">
    <property type="entry name" value="Leu_rpt_41"/>
</dbReference>
<dbReference type="InterPro" id="IPR032675">
    <property type="entry name" value="LRR_dom_sf"/>
</dbReference>
<dbReference type="PANTHER" id="PTHR15354:SF1">
    <property type="entry name" value="LEUCINE-RICH REPEAT-CONTAINING PROTEIN 41"/>
    <property type="match status" value="1"/>
</dbReference>
<dbReference type="PANTHER" id="PTHR15354">
    <property type="entry name" value="MUF1"/>
    <property type="match status" value="1"/>
</dbReference>
<dbReference type="SMART" id="SM00368">
    <property type="entry name" value="LRR_RI"/>
    <property type="match status" value="3"/>
</dbReference>
<dbReference type="SUPFAM" id="SSF52047">
    <property type="entry name" value="RNI-like"/>
    <property type="match status" value="1"/>
</dbReference>
<name>LRC41_MOUSE</name>